<proteinExistence type="inferred from homology"/>
<feature type="chain" id="PRO_0000301527" description="HTH-type transcriptional repressor NanR">
    <location>
        <begin position="1"/>
        <end position="263"/>
    </location>
</feature>
<feature type="domain" description="HTH gntR-type" evidence="1">
    <location>
        <begin position="30"/>
        <end position="98"/>
    </location>
</feature>
<feature type="DNA-binding region" description="H-T-H motif" evidence="1">
    <location>
        <begin position="58"/>
        <end position="77"/>
    </location>
</feature>
<feature type="region of interest" description="Disordered" evidence="2">
    <location>
        <begin position="1"/>
        <end position="22"/>
    </location>
</feature>
<comment type="function">
    <text evidence="1">Transcriptional repressor that controls expression of the genes required for the catabolism of sialic acids.</text>
</comment>
<comment type="similarity">
    <text evidence="1">Belongs to the NanR family.</text>
</comment>
<evidence type="ECO:0000255" key="1">
    <source>
        <dbReference type="HAMAP-Rule" id="MF_01236"/>
    </source>
</evidence>
<evidence type="ECO:0000256" key="2">
    <source>
        <dbReference type="SAM" id="MobiDB-lite"/>
    </source>
</evidence>
<name>NANR_SHIBS</name>
<gene>
    <name evidence="1" type="primary">nanR</name>
    <name type="ordered locus">SBO_3163</name>
</gene>
<sequence>MGLMNAFDSQTEDSSPAIGRNLRSRPLARKKLSEMVEEELEQMIRRREFGEGEQLPSERELMAFFNVGRPSVREALAALKRKGLVQINNGERARVSRPSADTIIGELSGMAKDFLSHPGGIAHFEQLRLFFESSLVRYAAEHATDEQIDLLAKALEINSQSLDNNAAFIRSDVDFHRVLAEIPGNPIFMAIHVALLDWLIAARPTVTDQALHEHNNVSYQQHIAIVDAIRRHDPDEADRALQSHLNSVSATWHAFGQTTNKKK</sequence>
<protein>
    <recommendedName>
        <fullName evidence="1">HTH-type transcriptional repressor NanR</fullName>
    </recommendedName>
</protein>
<dbReference type="EMBL" id="CP000036">
    <property type="protein sequence ID" value="ABB67663.1"/>
    <property type="molecule type" value="Genomic_DNA"/>
</dbReference>
<dbReference type="RefSeq" id="WP_000523845.1">
    <property type="nucleotide sequence ID" value="NC_007613.1"/>
</dbReference>
<dbReference type="SMR" id="Q31W95"/>
<dbReference type="GeneID" id="75206076"/>
<dbReference type="KEGG" id="sbo:SBO_3163"/>
<dbReference type="HOGENOM" id="CLU_017584_9_1_6"/>
<dbReference type="Proteomes" id="UP000007067">
    <property type="component" value="Chromosome"/>
</dbReference>
<dbReference type="GO" id="GO:0003677">
    <property type="term" value="F:DNA binding"/>
    <property type="evidence" value="ECO:0007669"/>
    <property type="project" value="UniProtKB-KW"/>
</dbReference>
<dbReference type="GO" id="GO:0003700">
    <property type="term" value="F:DNA-binding transcription factor activity"/>
    <property type="evidence" value="ECO:0007669"/>
    <property type="project" value="UniProtKB-UniRule"/>
</dbReference>
<dbReference type="GO" id="GO:0045892">
    <property type="term" value="P:negative regulation of DNA-templated transcription"/>
    <property type="evidence" value="ECO:0007669"/>
    <property type="project" value="UniProtKB-UniRule"/>
</dbReference>
<dbReference type="CDD" id="cd07377">
    <property type="entry name" value="WHTH_GntR"/>
    <property type="match status" value="1"/>
</dbReference>
<dbReference type="FunFam" id="1.10.10.10:FF:000150">
    <property type="entry name" value="HTH-type transcriptional repressor NanR"/>
    <property type="match status" value="1"/>
</dbReference>
<dbReference type="FunFam" id="1.20.120.530:FF:000006">
    <property type="entry name" value="HTH-type transcriptional repressor NanR"/>
    <property type="match status" value="1"/>
</dbReference>
<dbReference type="Gene3D" id="1.20.120.530">
    <property type="entry name" value="GntR ligand-binding domain-like"/>
    <property type="match status" value="1"/>
</dbReference>
<dbReference type="Gene3D" id="1.10.10.10">
    <property type="entry name" value="Winged helix-like DNA-binding domain superfamily/Winged helix DNA-binding domain"/>
    <property type="match status" value="1"/>
</dbReference>
<dbReference type="HAMAP" id="MF_01236">
    <property type="entry name" value="HTH_NanR"/>
    <property type="match status" value="1"/>
</dbReference>
<dbReference type="InterPro" id="IPR011711">
    <property type="entry name" value="GntR_C"/>
</dbReference>
<dbReference type="InterPro" id="IPR008920">
    <property type="entry name" value="TF_FadR/GntR_C"/>
</dbReference>
<dbReference type="InterPro" id="IPR000524">
    <property type="entry name" value="Tscrpt_reg_HTH_GntR"/>
</dbReference>
<dbReference type="InterPro" id="IPR023730">
    <property type="entry name" value="Tscrpt_reg_NanR"/>
</dbReference>
<dbReference type="InterPro" id="IPR036388">
    <property type="entry name" value="WH-like_DNA-bd_sf"/>
</dbReference>
<dbReference type="InterPro" id="IPR036390">
    <property type="entry name" value="WH_DNA-bd_sf"/>
</dbReference>
<dbReference type="NCBIfam" id="NF003011">
    <property type="entry name" value="PRK03837.1"/>
    <property type="match status" value="1"/>
</dbReference>
<dbReference type="PANTHER" id="PTHR43537:SF53">
    <property type="entry name" value="HTH-TYPE TRANSCRIPTIONAL REPRESSOR NANR"/>
    <property type="match status" value="1"/>
</dbReference>
<dbReference type="PANTHER" id="PTHR43537">
    <property type="entry name" value="TRANSCRIPTIONAL REGULATOR, GNTR FAMILY"/>
    <property type="match status" value="1"/>
</dbReference>
<dbReference type="Pfam" id="PF07729">
    <property type="entry name" value="FCD"/>
    <property type="match status" value="1"/>
</dbReference>
<dbReference type="Pfam" id="PF00392">
    <property type="entry name" value="GntR"/>
    <property type="match status" value="1"/>
</dbReference>
<dbReference type="PRINTS" id="PR00035">
    <property type="entry name" value="HTHGNTR"/>
</dbReference>
<dbReference type="SMART" id="SM00895">
    <property type="entry name" value="FCD"/>
    <property type="match status" value="1"/>
</dbReference>
<dbReference type="SMART" id="SM00345">
    <property type="entry name" value="HTH_GNTR"/>
    <property type="match status" value="1"/>
</dbReference>
<dbReference type="SUPFAM" id="SSF48008">
    <property type="entry name" value="GntR ligand-binding domain-like"/>
    <property type="match status" value="1"/>
</dbReference>
<dbReference type="SUPFAM" id="SSF46785">
    <property type="entry name" value="Winged helix' DNA-binding domain"/>
    <property type="match status" value="1"/>
</dbReference>
<dbReference type="PROSITE" id="PS50949">
    <property type="entry name" value="HTH_GNTR"/>
    <property type="match status" value="1"/>
</dbReference>
<reference key="1">
    <citation type="journal article" date="2005" name="Nucleic Acids Res.">
        <title>Genome dynamics and diversity of Shigella species, the etiologic agents of bacillary dysentery.</title>
        <authorList>
            <person name="Yang F."/>
            <person name="Yang J."/>
            <person name="Zhang X."/>
            <person name="Chen L."/>
            <person name="Jiang Y."/>
            <person name="Yan Y."/>
            <person name="Tang X."/>
            <person name="Wang J."/>
            <person name="Xiong Z."/>
            <person name="Dong J."/>
            <person name="Xue Y."/>
            <person name="Zhu Y."/>
            <person name="Xu X."/>
            <person name="Sun L."/>
            <person name="Chen S."/>
            <person name="Nie H."/>
            <person name="Peng J."/>
            <person name="Xu J."/>
            <person name="Wang Y."/>
            <person name="Yuan Z."/>
            <person name="Wen Y."/>
            <person name="Yao Z."/>
            <person name="Shen Y."/>
            <person name="Qiang B."/>
            <person name="Hou Y."/>
            <person name="Yu J."/>
            <person name="Jin Q."/>
        </authorList>
    </citation>
    <scope>NUCLEOTIDE SEQUENCE [LARGE SCALE GENOMIC DNA]</scope>
    <source>
        <strain>Sb227</strain>
    </source>
</reference>
<keyword id="KW-0238">DNA-binding</keyword>
<keyword id="KW-0678">Repressor</keyword>
<keyword id="KW-0804">Transcription</keyword>
<keyword id="KW-0805">Transcription regulation</keyword>
<organism>
    <name type="scientific">Shigella boydii serotype 4 (strain Sb227)</name>
    <dbReference type="NCBI Taxonomy" id="300268"/>
    <lineage>
        <taxon>Bacteria</taxon>
        <taxon>Pseudomonadati</taxon>
        <taxon>Pseudomonadota</taxon>
        <taxon>Gammaproteobacteria</taxon>
        <taxon>Enterobacterales</taxon>
        <taxon>Enterobacteriaceae</taxon>
        <taxon>Shigella</taxon>
    </lineage>
</organism>
<accession>Q31W95</accession>